<proteinExistence type="inferred from homology"/>
<comment type="catalytic activity">
    <reaction evidence="1">
        <text>(4aS,6R)-4a-hydroxy-L-erythro-5,6,7,8-tetrahydrobiopterin = (6R)-L-erythro-6,7-dihydrobiopterin + H2O</text>
        <dbReference type="Rhea" id="RHEA:11920"/>
        <dbReference type="ChEBI" id="CHEBI:15377"/>
        <dbReference type="ChEBI" id="CHEBI:15642"/>
        <dbReference type="ChEBI" id="CHEBI:43120"/>
        <dbReference type="EC" id="4.2.1.96"/>
    </reaction>
</comment>
<comment type="similarity">
    <text evidence="1">Belongs to the pterin-4-alpha-carbinolamine dehydratase family.</text>
</comment>
<protein>
    <recommendedName>
        <fullName evidence="1">Putative pterin-4-alpha-carbinolamine dehydratase</fullName>
        <shortName evidence="1">PHS</shortName>
        <ecNumber evidence="1">4.2.1.96</ecNumber>
    </recommendedName>
    <alternativeName>
        <fullName evidence="1">4-alpha-hydroxy-tetrahydropterin dehydratase</fullName>
    </alternativeName>
    <alternativeName>
        <fullName evidence="1">Pterin carbinolamine dehydratase</fullName>
        <shortName evidence="1">PCD</shortName>
    </alternativeName>
</protein>
<reference key="1">
    <citation type="journal article" date="2009" name="J. Bacteriol.">
        <title>Genome sequence of Azotobacter vinelandii, an obligate aerobe specialized to support diverse anaerobic metabolic processes.</title>
        <authorList>
            <person name="Setubal J.C."/>
            <person name="Dos Santos P."/>
            <person name="Goldman B.S."/>
            <person name="Ertesvaag H."/>
            <person name="Espin G."/>
            <person name="Rubio L.M."/>
            <person name="Valla S."/>
            <person name="Almeida N.F."/>
            <person name="Balasubramanian D."/>
            <person name="Cromes L."/>
            <person name="Curatti L."/>
            <person name="Du Z."/>
            <person name="Godsy E."/>
            <person name="Goodner B."/>
            <person name="Hellner-Burris K."/>
            <person name="Hernandez J.A."/>
            <person name="Houmiel K."/>
            <person name="Imperial J."/>
            <person name="Kennedy C."/>
            <person name="Larson T.J."/>
            <person name="Latreille P."/>
            <person name="Ligon L.S."/>
            <person name="Lu J."/>
            <person name="Maerk M."/>
            <person name="Miller N.M."/>
            <person name="Norton S."/>
            <person name="O'Carroll I.P."/>
            <person name="Paulsen I."/>
            <person name="Raulfs E.C."/>
            <person name="Roemer R."/>
            <person name="Rosser J."/>
            <person name="Segura D."/>
            <person name="Slater S."/>
            <person name="Stricklin S.L."/>
            <person name="Studholme D.J."/>
            <person name="Sun J."/>
            <person name="Viana C.J."/>
            <person name="Wallin E."/>
            <person name="Wang B."/>
            <person name="Wheeler C."/>
            <person name="Zhu H."/>
            <person name="Dean D.R."/>
            <person name="Dixon R."/>
            <person name="Wood D."/>
        </authorList>
    </citation>
    <scope>NUCLEOTIDE SEQUENCE [LARGE SCALE GENOMIC DNA]</scope>
    <source>
        <strain>DJ / ATCC BAA-1303</strain>
    </source>
</reference>
<feature type="chain" id="PRO_1000206069" description="Putative pterin-4-alpha-carbinolamine dehydratase">
    <location>
        <begin position="1"/>
        <end position="118"/>
    </location>
</feature>
<dbReference type="EC" id="4.2.1.96" evidence="1"/>
<dbReference type="EMBL" id="CP001157">
    <property type="protein sequence ID" value="ACO79615.1"/>
    <property type="molecule type" value="Genomic_DNA"/>
</dbReference>
<dbReference type="RefSeq" id="WP_012701995.1">
    <property type="nucleotide sequence ID" value="NC_012560.1"/>
</dbReference>
<dbReference type="SMR" id="C1DQH9"/>
<dbReference type="STRING" id="322710.Avin_34660"/>
<dbReference type="EnsemblBacteria" id="ACO79615">
    <property type="protein sequence ID" value="ACO79615"/>
    <property type="gene ID" value="Avin_34660"/>
</dbReference>
<dbReference type="GeneID" id="88186474"/>
<dbReference type="KEGG" id="avn:Avin_34660"/>
<dbReference type="eggNOG" id="COG2154">
    <property type="taxonomic scope" value="Bacteria"/>
</dbReference>
<dbReference type="HOGENOM" id="CLU_081974_2_2_6"/>
<dbReference type="OrthoDB" id="5294615at2"/>
<dbReference type="Proteomes" id="UP000002424">
    <property type="component" value="Chromosome"/>
</dbReference>
<dbReference type="GO" id="GO:0008124">
    <property type="term" value="F:4-alpha-hydroxytetrahydrobiopterin dehydratase activity"/>
    <property type="evidence" value="ECO:0007669"/>
    <property type="project" value="UniProtKB-UniRule"/>
</dbReference>
<dbReference type="GO" id="GO:0006729">
    <property type="term" value="P:tetrahydrobiopterin biosynthetic process"/>
    <property type="evidence" value="ECO:0007669"/>
    <property type="project" value="InterPro"/>
</dbReference>
<dbReference type="CDD" id="cd00913">
    <property type="entry name" value="PCD_DCoH_subfamily_a"/>
    <property type="match status" value="1"/>
</dbReference>
<dbReference type="Gene3D" id="3.30.1360.20">
    <property type="entry name" value="Transcriptional coactivator/pterin dehydratase"/>
    <property type="match status" value="1"/>
</dbReference>
<dbReference type="HAMAP" id="MF_00434">
    <property type="entry name" value="Pterin_4_alpha"/>
    <property type="match status" value="1"/>
</dbReference>
<dbReference type="InterPro" id="IPR036428">
    <property type="entry name" value="PCD_sf"/>
</dbReference>
<dbReference type="InterPro" id="IPR050376">
    <property type="entry name" value="Pterin-4-alpha-carb_dehyd"/>
</dbReference>
<dbReference type="InterPro" id="IPR001533">
    <property type="entry name" value="Pterin_deHydtase"/>
</dbReference>
<dbReference type="NCBIfam" id="NF002016">
    <property type="entry name" value="PRK00823.1-1"/>
    <property type="match status" value="1"/>
</dbReference>
<dbReference type="PANTHER" id="PTHR42805">
    <property type="entry name" value="PTERIN-4-ALPHA-CARBINOLAMINE DEHYDRATASE-RELATED"/>
    <property type="match status" value="1"/>
</dbReference>
<dbReference type="PANTHER" id="PTHR42805:SF1">
    <property type="entry name" value="PTERIN-4-ALPHA-CARBINOLAMINE DEHYDRATASE-RELATED"/>
    <property type="match status" value="1"/>
</dbReference>
<dbReference type="Pfam" id="PF01329">
    <property type="entry name" value="Pterin_4a"/>
    <property type="match status" value="1"/>
</dbReference>
<dbReference type="SUPFAM" id="SSF55248">
    <property type="entry name" value="PCD-like"/>
    <property type="match status" value="1"/>
</dbReference>
<organism>
    <name type="scientific">Azotobacter vinelandii (strain DJ / ATCC BAA-1303)</name>
    <dbReference type="NCBI Taxonomy" id="322710"/>
    <lineage>
        <taxon>Bacteria</taxon>
        <taxon>Pseudomonadati</taxon>
        <taxon>Pseudomonadota</taxon>
        <taxon>Gammaproteobacteria</taxon>
        <taxon>Pseudomonadales</taxon>
        <taxon>Pseudomonadaceae</taxon>
        <taxon>Azotobacter</taxon>
    </lineage>
</organism>
<accession>C1DQH9</accession>
<sequence>MTVLSQAHCEACRADAPKVSEQELADLIRQIPDWRVENRDGILQLEKVFAFRNFARALAFTDAVGALAEAEGHHPALLTEWGRVTVTWWTHKIRGLHRNDFIMAARTDELAKGAEDRA</sequence>
<evidence type="ECO:0000255" key="1">
    <source>
        <dbReference type="HAMAP-Rule" id="MF_00434"/>
    </source>
</evidence>
<name>PHS_AZOVD</name>
<keyword id="KW-0456">Lyase</keyword>
<gene>
    <name type="ordered locus">Avin_34660</name>
</gene>